<name>SMG_SHESA</name>
<accession>A0KR64</accession>
<comment type="similarity">
    <text evidence="1">Belongs to the Smg family.</text>
</comment>
<dbReference type="EMBL" id="CP000469">
    <property type="protein sequence ID" value="ABK46283.1"/>
    <property type="molecule type" value="Genomic_DNA"/>
</dbReference>
<dbReference type="RefSeq" id="WP_011715328.1">
    <property type="nucleotide sequence ID" value="NC_008577.1"/>
</dbReference>
<dbReference type="SMR" id="A0KR64"/>
<dbReference type="STRING" id="94122.Shewana3_0038"/>
<dbReference type="KEGG" id="shn:Shewana3_0038"/>
<dbReference type="eggNOG" id="COG2922">
    <property type="taxonomic scope" value="Bacteria"/>
</dbReference>
<dbReference type="HOGENOM" id="CLU_133242_0_0_6"/>
<dbReference type="OrthoDB" id="9788984at2"/>
<dbReference type="Proteomes" id="UP000002589">
    <property type="component" value="Chromosome"/>
</dbReference>
<dbReference type="HAMAP" id="MF_00598">
    <property type="entry name" value="Smg"/>
    <property type="match status" value="1"/>
</dbReference>
<dbReference type="InterPro" id="IPR007456">
    <property type="entry name" value="Smg"/>
</dbReference>
<dbReference type="NCBIfam" id="NF002897">
    <property type="entry name" value="PRK03430.1"/>
    <property type="match status" value="1"/>
</dbReference>
<dbReference type="PANTHER" id="PTHR38692">
    <property type="entry name" value="PROTEIN SMG"/>
    <property type="match status" value="1"/>
</dbReference>
<dbReference type="PANTHER" id="PTHR38692:SF1">
    <property type="entry name" value="PROTEIN SMG"/>
    <property type="match status" value="1"/>
</dbReference>
<dbReference type="Pfam" id="PF04361">
    <property type="entry name" value="DUF494"/>
    <property type="match status" value="1"/>
</dbReference>
<evidence type="ECO:0000255" key="1">
    <source>
        <dbReference type="HAMAP-Rule" id="MF_00598"/>
    </source>
</evidence>
<protein>
    <recommendedName>
        <fullName evidence="1">Protein Smg homolog</fullName>
    </recommendedName>
</protein>
<feature type="chain" id="PRO_1000025669" description="Protein Smg homolog">
    <location>
        <begin position="1"/>
        <end position="158"/>
    </location>
</feature>
<organism>
    <name type="scientific">Shewanella sp. (strain ANA-3)</name>
    <dbReference type="NCBI Taxonomy" id="94122"/>
    <lineage>
        <taxon>Bacteria</taxon>
        <taxon>Pseudomonadati</taxon>
        <taxon>Pseudomonadota</taxon>
        <taxon>Gammaproteobacteria</taxon>
        <taxon>Alteromonadales</taxon>
        <taxon>Shewanellaceae</taxon>
        <taxon>Shewanella</taxon>
    </lineage>
</organism>
<proteinExistence type="inferred from homology"/>
<gene>
    <name evidence="1" type="primary">smg</name>
    <name type="ordered locus">Shewana3_0038</name>
</gene>
<sequence>MFDILMYLFENYVHSEVELLVDEDELTKELTRAGFHQSEILKALTWLERLAELQESDKPYLCNHDQHSFRIYTKEEMEKLDVECRGFLLFLEQVKVLNVETREMVIDRVMELDEPALILEDLKWVILMVLFNAPGHESAYEQMEDLIFEQPEEGRLHS</sequence>
<reference key="1">
    <citation type="submission" date="2006-09" db="EMBL/GenBank/DDBJ databases">
        <title>Complete sequence of chromosome 1 of Shewanella sp. ANA-3.</title>
        <authorList>
            <person name="Copeland A."/>
            <person name="Lucas S."/>
            <person name="Lapidus A."/>
            <person name="Barry K."/>
            <person name="Detter J.C."/>
            <person name="Glavina del Rio T."/>
            <person name="Hammon N."/>
            <person name="Israni S."/>
            <person name="Dalin E."/>
            <person name="Tice H."/>
            <person name="Pitluck S."/>
            <person name="Chertkov O."/>
            <person name="Brettin T."/>
            <person name="Bruce D."/>
            <person name="Han C."/>
            <person name="Tapia R."/>
            <person name="Gilna P."/>
            <person name="Schmutz J."/>
            <person name="Larimer F."/>
            <person name="Land M."/>
            <person name="Hauser L."/>
            <person name="Kyrpides N."/>
            <person name="Kim E."/>
            <person name="Newman D."/>
            <person name="Salticov C."/>
            <person name="Konstantinidis K."/>
            <person name="Klappenback J."/>
            <person name="Tiedje J."/>
            <person name="Richardson P."/>
        </authorList>
    </citation>
    <scope>NUCLEOTIDE SEQUENCE [LARGE SCALE GENOMIC DNA]</scope>
    <source>
        <strain>ANA-3</strain>
    </source>
</reference>